<protein>
    <recommendedName>
        <fullName>Dihydrolipoyllysine-residue acetyltransferase component of pyruvate dehydrogenase complex</fullName>
        <ecNumber>2.3.1.12</ecNumber>
    </recommendedName>
    <alternativeName>
        <fullName>Dihydrolipoamide acetyltransferase component of pyruvate dehydrogenase complex</fullName>
    </alternativeName>
    <alternativeName>
        <fullName>E2</fullName>
    </alternativeName>
</protein>
<sequence>MANEFKFTDVGEGLHEGKVTEILKQVGDQIKIDEALFVVETDKVTTELPSPFAGTISAINVKVGDVVSIGQVMAVIGEKTSTPLVEPKPQPTEEVAKVKEAGASVVGEIKVSDNLFPIFGVKPHATPAVKDTKVASSTNITVETTQKPESKTEQKTIAISTMRKAIAEAMTKSHAIIPTTVLTFYVNATKLKQYRESVNGYALSKYSMKISYFAFFVKAIVNALKKFPVFNASYDPDQNEIVLNDDINVGIAVDTEEGLIVPNIKQAQTKSVVEIAQAIVDLANKARTKKIKLTDLNKGTISVTNFGSLGAAVGTPIIKYPEMCIVATGNLEERIVKVENGIAVHTILPLTIAADHRWVDGADVGRFGKEIAKQIEELIDLTVA</sequence>
<dbReference type="EC" id="2.3.1.12"/>
<dbReference type="EMBL" id="L43967">
    <property type="protein sequence ID" value="AAC71494.1"/>
    <property type="molecule type" value="Genomic_DNA"/>
</dbReference>
<dbReference type="PIR" id="A64230">
    <property type="entry name" value="A64230"/>
</dbReference>
<dbReference type="RefSeq" id="WP_009885904.1">
    <property type="nucleotide sequence ID" value="NC_000908.2"/>
</dbReference>
<dbReference type="SMR" id="P47514"/>
<dbReference type="FunCoup" id="P47514">
    <property type="interactions" value="181"/>
</dbReference>
<dbReference type="STRING" id="243273.MG_272"/>
<dbReference type="GeneID" id="88282428"/>
<dbReference type="KEGG" id="mge:MG_272"/>
<dbReference type="eggNOG" id="COG0508">
    <property type="taxonomic scope" value="Bacteria"/>
</dbReference>
<dbReference type="HOGENOM" id="CLU_016733_10_0_14"/>
<dbReference type="InParanoid" id="P47514"/>
<dbReference type="OrthoDB" id="9805770at2"/>
<dbReference type="BioCyc" id="MGEN243273:G1GJ2-330-MONOMER"/>
<dbReference type="Proteomes" id="UP000000807">
    <property type="component" value="Chromosome"/>
</dbReference>
<dbReference type="GO" id="GO:0005737">
    <property type="term" value="C:cytoplasm"/>
    <property type="evidence" value="ECO:0000318"/>
    <property type="project" value="GO_Central"/>
</dbReference>
<dbReference type="GO" id="GO:0016407">
    <property type="term" value="F:acetyltransferase activity"/>
    <property type="evidence" value="ECO:0000318"/>
    <property type="project" value="GO_Central"/>
</dbReference>
<dbReference type="GO" id="GO:0004742">
    <property type="term" value="F:dihydrolipoyllysine-residue acetyltransferase activity"/>
    <property type="evidence" value="ECO:0007669"/>
    <property type="project" value="UniProtKB-EC"/>
</dbReference>
<dbReference type="GO" id="GO:0031405">
    <property type="term" value="F:lipoic acid binding"/>
    <property type="evidence" value="ECO:0000318"/>
    <property type="project" value="GO_Central"/>
</dbReference>
<dbReference type="CDD" id="cd06849">
    <property type="entry name" value="lipoyl_domain"/>
    <property type="match status" value="1"/>
</dbReference>
<dbReference type="FunFam" id="2.40.50.100:FF:000114">
    <property type="entry name" value="Dihydrolipoamide acetyltransferase component of pyruvate dehydrogenase complex"/>
    <property type="match status" value="1"/>
</dbReference>
<dbReference type="FunFam" id="3.30.559.10:FF:000007">
    <property type="entry name" value="Dihydrolipoamide acetyltransferase component of pyruvate dehydrogenase complex"/>
    <property type="match status" value="1"/>
</dbReference>
<dbReference type="Gene3D" id="2.40.50.100">
    <property type="match status" value="1"/>
</dbReference>
<dbReference type="Gene3D" id="3.30.559.10">
    <property type="entry name" value="Chloramphenicol acetyltransferase-like domain"/>
    <property type="match status" value="1"/>
</dbReference>
<dbReference type="InterPro" id="IPR003016">
    <property type="entry name" value="2-oxoA_DH_lipoyl-BS"/>
</dbReference>
<dbReference type="InterPro" id="IPR001078">
    <property type="entry name" value="2-oxoacid_DH_actylTfrase"/>
</dbReference>
<dbReference type="InterPro" id="IPR050743">
    <property type="entry name" value="2-oxoacid_DH_E2_comp"/>
</dbReference>
<dbReference type="InterPro" id="IPR000089">
    <property type="entry name" value="Biotin_lipoyl"/>
</dbReference>
<dbReference type="InterPro" id="IPR023213">
    <property type="entry name" value="CAT-like_dom_sf"/>
</dbReference>
<dbReference type="InterPro" id="IPR011053">
    <property type="entry name" value="Single_hybrid_motif"/>
</dbReference>
<dbReference type="PANTHER" id="PTHR43178">
    <property type="entry name" value="DIHYDROLIPOAMIDE ACETYLTRANSFERASE COMPONENT OF PYRUVATE DEHYDROGENASE COMPLEX"/>
    <property type="match status" value="1"/>
</dbReference>
<dbReference type="PANTHER" id="PTHR43178:SF5">
    <property type="entry name" value="LIPOAMIDE ACYLTRANSFERASE COMPONENT OF BRANCHED-CHAIN ALPHA-KETO ACID DEHYDROGENASE COMPLEX, MITOCHONDRIAL"/>
    <property type="match status" value="1"/>
</dbReference>
<dbReference type="Pfam" id="PF00198">
    <property type="entry name" value="2-oxoacid_dh"/>
    <property type="match status" value="1"/>
</dbReference>
<dbReference type="Pfam" id="PF00364">
    <property type="entry name" value="Biotin_lipoyl"/>
    <property type="match status" value="1"/>
</dbReference>
<dbReference type="SUPFAM" id="SSF52777">
    <property type="entry name" value="CoA-dependent acyltransferases"/>
    <property type="match status" value="1"/>
</dbReference>
<dbReference type="SUPFAM" id="SSF51230">
    <property type="entry name" value="Single hybrid motif"/>
    <property type="match status" value="1"/>
</dbReference>
<dbReference type="PROSITE" id="PS50968">
    <property type="entry name" value="BIOTINYL_LIPOYL"/>
    <property type="match status" value="1"/>
</dbReference>
<dbReference type="PROSITE" id="PS00189">
    <property type="entry name" value="LIPOYL"/>
    <property type="match status" value="1"/>
</dbReference>
<keyword id="KW-0012">Acyltransferase</keyword>
<keyword id="KW-0450">Lipoyl</keyword>
<keyword id="KW-1185">Reference proteome</keyword>
<keyword id="KW-0808">Transferase</keyword>
<name>ODP2_MYCGE</name>
<feature type="chain" id="PRO_0000162281" description="Dihydrolipoyllysine-residue acetyltransferase component of pyruvate dehydrogenase complex">
    <location>
        <begin position="1"/>
        <end position="384"/>
    </location>
</feature>
<feature type="domain" description="Lipoyl-binding" evidence="3">
    <location>
        <begin position="2"/>
        <end position="77"/>
    </location>
</feature>
<feature type="active site" evidence="2">
    <location>
        <position position="356"/>
    </location>
</feature>
<feature type="modified residue" description="N6-lipoyllysine" evidence="1 3">
    <location>
        <position position="43"/>
    </location>
</feature>
<proteinExistence type="inferred from homology"/>
<reference key="1">
    <citation type="journal article" date="1995" name="Science">
        <title>The minimal gene complement of Mycoplasma genitalium.</title>
        <authorList>
            <person name="Fraser C.M."/>
            <person name="Gocayne J.D."/>
            <person name="White O."/>
            <person name="Adams M.D."/>
            <person name="Clayton R.A."/>
            <person name="Fleischmann R.D."/>
            <person name="Bult C.J."/>
            <person name="Kerlavage A.R."/>
            <person name="Sutton G.G."/>
            <person name="Kelley J.M."/>
            <person name="Fritchman J.L."/>
            <person name="Weidman J.F."/>
            <person name="Small K.V."/>
            <person name="Sandusky M."/>
            <person name="Fuhrmann J.L."/>
            <person name="Nguyen D.T."/>
            <person name="Utterback T.R."/>
            <person name="Saudek D.M."/>
            <person name="Phillips C.A."/>
            <person name="Merrick J.M."/>
            <person name="Tomb J.-F."/>
            <person name="Dougherty B.A."/>
            <person name="Bott K.F."/>
            <person name="Hu P.-C."/>
            <person name="Lucier T.S."/>
            <person name="Peterson S.N."/>
            <person name="Smith H.O."/>
            <person name="Hutchison C.A. III"/>
            <person name="Venter J.C."/>
        </authorList>
    </citation>
    <scope>NUCLEOTIDE SEQUENCE [LARGE SCALE GENOMIC DNA]</scope>
    <source>
        <strain>ATCC 33530 / DSM 19775 / NCTC 10195 / G37</strain>
    </source>
</reference>
<evidence type="ECO:0000250" key="1"/>
<evidence type="ECO:0000255" key="2"/>
<evidence type="ECO:0000255" key="3">
    <source>
        <dbReference type="PROSITE-ProRule" id="PRU01066"/>
    </source>
</evidence>
<evidence type="ECO:0000305" key="4"/>
<comment type="function">
    <text evidence="1">The pyruvate dehydrogenase complex catalyzes the overall conversion of pyruvate to acetyl-CoA and CO(2). It contains multiple copies of three enzymatic components: pyruvate dehydrogenase (E1), dihydrolipoamide acetyltransferase (E2) and lipoamide dehydrogenase (E3) (By similarity).</text>
</comment>
<comment type="catalytic activity">
    <reaction>
        <text>N(6)-[(R)-dihydrolipoyl]-L-lysyl-[protein] + acetyl-CoA = N(6)-[(R)-S(8)-acetyldihydrolipoyl]-L-lysyl-[protein] + CoA</text>
        <dbReference type="Rhea" id="RHEA:17017"/>
        <dbReference type="Rhea" id="RHEA-COMP:10475"/>
        <dbReference type="Rhea" id="RHEA-COMP:10478"/>
        <dbReference type="ChEBI" id="CHEBI:57287"/>
        <dbReference type="ChEBI" id="CHEBI:57288"/>
        <dbReference type="ChEBI" id="CHEBI:83100"/>
        <dbReference type="ChEBI" id="CHEBI:83111"/>
        <dbReference type="EC" id="2.3.1.12"/>
    </reaction>
</comment>
<comment type="cofactor">
    <cofactor evidence="1">
        <name>(R)-lipoate</name>
        <dbReference type="ChEBI" id="CHEBI:83088"/>
    </cofactor>
    <text evidence="1">Binds 1 lipoyl cofactor covalently.</text>
</comment>
<comment type="subunit">
    <text evidence="1">Forms a 24-polypeptide structural core with octahedral symmetry.</text>
</comment>
<comment type="similarity">
    <text evidence="4">Belongs to the 2-oxoacid dehydrogenase family.</text>
</comment>
<gene>
    <name type="primary">pdhC</name>
    <name type="ordered locus">MG272</name>
</gene>
<organism>
    <name type="scientific">Mycoplasma genitalium (strain ATCC 33530 / DSM 19775 / NCTC 10195 / G37)</name>
    <name type="common">Mycoplasmoides genitalium</name>
    <dbReference type="NCBI Taxonomy" id="243273"/>
    <lineage>
        <taxon>Bacteria</taxon>
        <taxon>Bacillati</taxon>
        <taxon>Mycoplasmatota</taxon>
        <taxon>Mycoplasmoidales</taxon>
        <taxon>Mycoplasmoidaceae</taxon>
        <taxon>Mycoplasmoides</taxon>
    </lineage>
</organism>
<accession>P47514</accession>